<keyword id="KW-1003">Cell membrane</keyword>
<keyword id="KW-0256">Endoplasmic reticulum</keyword>
<keyword id="KW-0325">Glycoprotein</keyword>
<keyword id="KW-0378">Hydrolase</keyword>
<keyword id="KW-0442">Lipid degradation</keyword>
<keyword id="KW-0443">Lipid metabolism</keyword>
<keyword id="KW-0472">Membrane</keyword>
<keyword id="KW-0492">Microsome</keyword>
<keyword id="KW-1185">Reference proteome</keyword>
<keyword id="KW-0735">Signal-anchor</keyword>
<keyword id="KW-0812">Transmembrane</keyword>
<keyword id="KW-1133">Transmembrane helix</keyword>
<comment type="function">
    <text evidence="3">Hydrolyzes 2-acetyl monoalkylglycerol ether (1-O-alkyl-2-acetyl-sn-glycerol), the penultimate precursor of the pathway for de novo synthesis of platelet-activating factor (By similarity). May be responsible for the hydrolysis of cholesterol esters (such as cholesteryl (9Z-octadecenoate)) in macrophages (By similarity). Also involved in organ detoxification by hydrolyzing exogenous organophosphorus compounds (By similarity).</text>
</comment>
<comment type="catalytic activity">
    <reaction evidence="2">
        <text>a 1-O-alkyl-2-acetyl-sn-glycerol + H2O = a 1-O-alkyl-sn-glycerol + acetate + H(+)</text>
        <dbReference type="Rhea" id="RHEA:11552"/>
        <dbReference type="ChEBI" id="CHEBI:15377"/>
        <dbReference type="ChEBI" id="CHEBI:15378"/>
        <dbReference type="ChEBI" id="CHEBI:15850"/>
        <dbReference type="ChEBI" id="CHEBI:16291"/>
        <dbReference type="ChEBI" id="CHEBI:30089"/>
        <dbReference type="EC" id="3.1.1.71"/>
    </reaction>
    <physiologicalReaction direction="left-to-right" evidence="2">
        <dbReference type="Rhea" id="RHEA:11553"/>
    </physiologicalReaction>
</comment>
<comment type="catalytic activity">
    <reaction evidence="3">
        <text>1-O-hexadecyl-2-acetyl-sn-glycerol + H2O = 1-O-hexadecyl-sn-glycerol + acetate + H(+)</text>
        <dbReference type="Rhea" id="RHEA:38563"/>
        <dbReference type="ChEBI" id="CHEBI:15377"/>
        <dbReference type="ChEBI" id="CHEBI:15378"/>
        <dbReference type="ChEBI" id="CHEBI:30089"/>
        <dbReference type="ChEBI" id="CHEBI:34115"/>
        <dbReference type="ChEBI" id="CHEBI:75936"/>
    </reaction>
    <physiologicalReaction direction="left-to-right" evidence="3">
        <dbReference type="Rhea" id="RHEA:38564"/>
    </physiologicalReaction>
</comment>
<comment type="catalytic activity">
    <reaction evidence="3">
        <text>a cholesterol ester + H2O = cholesterol + a fatty acid + H(+)</text>
        <dbReference type="Rhea" id="RHEA:36403"/>
        <dbReference type="ChEBI" id="CHEBI:15377"/>
        <dbReference type="ChEBI" id="CHEBI:15378"/>
        <dbReference type="ChEBI" id="CHEBI:16113"/>
        <dbReference type="ChEBI" id="CHEBI:17002"/>
        <dbReference type="ChEBI" id="CHEBI:28868"/>
    </reaction>
    <physiologicalReaction direction="left-to-right" evidence="3">
        <dbReference type="Rhea" id="RHEA:36404"/>
    </physiologicalReaction>
</comment>
<comment type="catalytic activity">
    <reaction evidence="3">
        <text>cholesteryl (9Z-octadecenoate) + H2O = cholesterol + (9Z)-octadecenoate + H(+)</text>
        <dbReference type="Rhea" id="RHEA:33875"/>
        <dbReference type="ChEBI" id="CHEBI:15377"/>
        <dbReference type="ChEBI" id="CHEBI:15378"/>
        <dbReference type="ChEBI" id="CHEBI:16113"/>
        <dbReference type="ChEBI" id="CHEBI:30823"/>
        <dbReference type="ChEBI" id="CHEBI:46898"/>
    </reaction>
    <physiologicalReaction direction="left-to-right" evidence="3">
        <dbReference type="Rhea" id="RHEA:33876"/>
    </physiologicalReaction>
</comment>
<comment type="subcellular location">
    <subcellularLocation>
        <location evidence="2">Cell membrane</location>
        <topology evidence="2">Single-pass type II membrane protein</topology>
    </subcellularLocation>
    <subcellularLocation>
        <location evidence="3">Microsome</location>
    </subcellularLocation>
</comment>
<comment type="PTM">
    <text evidence="2">N-glycosylated.</text>
</comment>
<comment type="similarity">
    <text evidence="6">Belongs to the 'GDXG' lipolytic enzyme family.</text>
</comment>
<organism>
    <name type="scientific">Rattus norvegicus</name>
    <name type="common">Rat</name>
    <dbReference type="NCBI Taxonomy" id="10116"/>
    <lineage>
        <taxon>Eukaryota</taxon>
        <taxon>Metazoa</taxon>
        <taxon>Chordata</taxon>
        <taxon>Craniata</taxon>
        <taxon>Vertebrata</taxon>
        <taxon>Euteleostomi</taxon>
        <taxon>Mammalia</taxon>
        <taxon>Eutheria</taxon>
        <taxon>Euarchontoglires</taxon>
        <taxon>Glires</taxon>
        <taxon>Rodentia</taxon>
        <taxon>Myomorpha</taxon>
        <taxon>Muroidea</taxon>
        <taxon>Muridae</taxon>
        <taxon>Murinae</taxon>
        <taxon>Rattus</taxon>
    </lineage>
</organism>
<sequence>MRSSCVLLAALLALVAYYVYIPLPSAVSDPWKLMLLDATFRGAQQVSNLIHSLGLSHHLITLNFIIISFGKKSARSSPRVKVTDTDFDGVEVRVFEGPPKPDEPLRRSVVYIHGGGWALASAKISYYDQLCTAMAEELNAVIVSIEYRLVPQVYFPEQIHDVIRATKYFLQPEVLDKYKVDPGRVGVSGDSAGGNLAAALGQQFTYVESLKNKLKLQALIYPVLQALDFNTPSYQQSMNTPILPRHVMVRYWVDYFKGNYDFVEAMIVNNHTSLDVERAAALRARLDWTSLLPSSIKKNYKPVLQTIGDARIVKEIPQLLDAAASPLIAEQEVLQALPKTYILTCEHDVLRDDGIMYAKRLESAGVNVTLDHFEDGFHGCMIFTSWPTNFSVGIRTRDSYFKWLDQNL</sequence>
<evidence type="ECO:0000250" key="1">
    <source>
        <dbReference type="UniProtKB" id="Q5NUF3"/>
    </source>
</evidence>
<evidence type="ECO:0000250" key="2">
    <source>
        <dbReference type="UniProtKB" id="Q6PIU2"/>
    </source>
</evidence>
<evidence type="ECO:0000250" key="3">
    <source>
        <dbReference type="UniProtKB" id="Q8BLF1"/>
    </source>
</evidence>
<evidence type="ECO:0000255" key="4"/>
<evidence type="ECO:0000255" key="5">
    <source>
        <dbReference type="PROSITE-ProRule" id="PRU10038"/>
    </source>
</evidence>
<evidence type="ECO:0000305" key="6"/>
<evidence type="ECO:0007744" key="7">
    <source>
    </source>
</evidence>
<protein>
    <recommendedName>
        <fullName>Neutral cholesterol ester hydrolase 1</fullName>
        <shortName>NCEH</shortName>
        <ecNumber evidence="3">3.1.1.-</ecNumber>
    </recommendedName>
    <alternativeName>
        <fullName evidence="3">Acetylalkylglycerol acetylhydrolase</fullName>
        <shortName evidence="2">2-acetyl MAGE hydrolase</shortName>
        <ecNumber evidence="3">3.1.1.71</ecNumber>
    </alternativeName>
    <alternativeName>
        <fullName>Arylacetamide deacetylase-like 1</fullName>
    </alternativeName>
</protein>
<proteinExistence type="evidence at protein level"/>
<accession>B2GV54</accession>
<reference key="1">
    <citation type="journal article" date="2004" name="Nature">
        <title>Genome sequence of the Brown Norway rat yields insights into mammalian evolution.</title>
        <authorList>
            <person name="Gibbs R.A."/>
            <person name="Weinstock G.M."/>
            <person name="Metzker M.L."/>
            <person name="Muzny D.M."/>
            <person name="Sodergren E.J."/>
            <person name="Scherer S."/>
            <person name="Scott G."/>
            <person name="Steffen D."/>
            <person name="Worley K.C."/>
            <person name="Burch P.E."/>
            <person name="Okwuonu G."/>
            <person name="Hines S."/>
            <person name="Lewis L."/>
            <person name="Deramo C."/>
            <person name="Delgado O."/>
            <person name="Dugan-Rocha S."/>
            <person name="Miner G."/>
            <person name="Morgan M."/>
            <person name="Hawes A."/>
            <person name="Gill R."/>
            <person name="Holt R.A."/>
            <person name="Adams M.D."/>
            <person name="Amanatides P.G."/>
            <person name="Baden-Tillson H."/>
            <person name="Barnstead M."/>
            <person name="Chin S."/>
            <person name="Evans C.A."/>
            <person name="Ferriera S."/>
            <person name="Fosler C."/>
            <person name="Glodek A."/>
            <person name="Gu Z."/>
            <person name="Jennings D."/>
            <person name="Kraft C.L."/>
            <person name="Nguyen T."/>
            <person name="Pfannkoch C.M."/>
            <person name="Sitter C."/>
            <person name="Sutton G.G."/>
            <person name="Venter J.C."/>
            <person name="Woodage T."/>
            <person name="Smith D."/>
            <person name="Lee H.-M."/>
            <person name="Gustafson E."/>
            <person name="Cahill P."/>
            <person name="Kana A."/>
            <person name="Doucette-Stamm L."/>
            <person name="Weinstock K."/>
            <person name="Fechtel K."/>
            <person name="Weiss R.B."/>
            <person name="Dunn D.M."/>
            <person name="Green E.D."/>
            <person name="Blakesley R.W."/>
            <person name="Bouffard G.G."/>
            <person name="De Jong P.J."/>
            <person name="Osoegawa K."/>
            <person name="Zhu B."/>
            <person name="Marra M."/>
            <person name="Schein J."/>
            <person name="Bosdet I."/>
            <person name="Fjell C."/>
            <person name="Jones S."/>
            <person name="Krzywinski M."/>
            <person name="Mathewson C."/>
            <person name="Siddiqui A."/>
            <person name="Wye N."/>
            <person name="McPherson J."/>
            <person name="Zhao S."/>
            <person name="Fraser C.M."/>
            <person name="Shetty J."/>
            <person name="Shatsman S."/>
            <person name="Geer K."/>
            <person name="Chen Y."/>
            <person name="Abramzon S."/>
            <person name="Nierman W.C."/>
            <person name="Havlak P.H."/>
            <person name="Chen R."/>
            <person name="Durbin K.J."/>
            <person name="Egan A."/>
            <person name="Ren Y."/>
            <person name="Song X.-Z."/>
            <person name="Li B."/>
            <person name="Liu Y."/>
            <person name="Qin X."/>
            <person name="Cawley S."/>
            <person name="Cooney A.J."/>
            <person name="D'Souza L.M."/>
            <person name="Martin K."/>
            <person name="Wu J.Q."/>
            <person name="Gonzalez-Garay M.L."/>
            <person name="Jackson A.R."/>
            <person name="Kalafus K.J."/>
            <person name="McLeod M.P."/>
            <person name="Milosavljevic A."/>
            <person name="Virk D."/>
            <person name="Volkov A."/>
            <person name="Wheeler D.A."/>
            <person name="Zhang Z."/>
            <person name="Bailey J.A."/>
            <person name="Eichler E.E."/>
            <person name="Tuzun E."/>
            <person name="Birney E."/>
            <person name="Mongin E."/>
            <person name="Ureta-Vidal A."/>
            <person name="Woodwark C."/>
            <person name="Zdobnov E."/>
            <person name="Bork P."/>
            <person name="Suyama M."/>
            <person name="Torrents D."/>
            <person name="Alexandersson M."/>
            <person name="Trask B.J."/>
            <person name="Young J.M."/>
            <person name="Huang H."/>
            <person name="Wang H."/>
            <person name="Xing H."/>
            <person name="Daniels S."/>
            <person name="Gietzen D."/>
            <person name="Schmidt J."/>
            <person name="Stevens K."/>
            <person name="Vitt U."/>
            <person name="Wingrove J."/>
            <person name="Camara F."/>
            <person name="Mar Alba M."/>
            <person name="Abril J.F."/>
            <person name="Guigo R."/>
            <person name="Smit A."/>
            <person name="Dubchak I."/>
            <person name="Rubin E.M."/>
            <person name="Couronne O."/>
            <person name="Poliakov A."/>
            <person name="Huebner N."/>
            <person name="Ganten D."/>
            <person name="Goesele C."/>
            <person name="Hummel O."/>
            <person name="Kreitler T."/>
            <person name="Lee Y.-A."/>
            <person name="Monti J."/>
            <person name="Schulz H."/>
            <person name="Zimdahl H."/>
            <person name="Himmelbauer H."/>
            <person name="Lehrach H."/>
            <person name="Jacob H.J."/>
            <person name="Bromberg S."/>
            <person name="Gullings-Handley J."/>
            <person name="Jensen-Seaman M.I."/>
            <person name="Kwitek A.E."/>
            <person name="Lazar J."/>
            <person name="Pasko D."/>
            <person name="Tonellato P.J."/>
            <person name="Twigger S."/>
            <person name="Ponting C.P."/>
            <person name="Duarte J.M."/>
            <person name="Rice S."/>
            <person name="Goodstadt L."/>
            <person name="Beatson S.A."/>
            <person name="Emes R.D."/>
            <person name="Winter E.E."/>
            <person name="Webber C."/>
            <person name="Brandt P."/>
            <person name="Nyakatura G."/>
            <person name="Adetobi M."/>
            <person name="Chiaromonte F."/>
            <person name="Elnitski L."/>
            <person name="Eswara P."/>
            <person name="Hardison R.C."/>
            <person name="Hou M."/>
            <person name="Kolbe D."/>
            <person name="Makova K."/>
            <person name="Miller W."/>
            <person name="Nekrutenko A."/>
            <person name="Riemer C."/>
            <person name="Schwartz S."/>
            <person name="Taylor J."/>
            <person name="Yang S."/>
            <person name="Zhang Y."/>
            <person name="Lindpaintner K."/>
            <person name="Andrews T.D."/>
            <person name="Caccamo M."/>
            <person name="Clamp M."/>
            <person name="Clarke L."/>
            <person name="Curwen V."/>
            <person name="Durbin R.M."/>
            <person name="Eyras E."/>
            <person name="Searle S.M."/>
            <person name="Cooper G.M."/>
            <person name="Batzoglou S."/>
            <person name="Brudno M."/>
            <person name="Sidow A."/>
            <person name="Stone E.A."/>
            <person name="Payseur B.A."/>
            <person name="Bourque G."/>
            <person name="Lopez-Otin C."/>
            <person name="Puente X.S."/>
            <person name="Chakrabarti K."/>
            <person name="Chatterji S."/>
            <person name="Dewey C."/>
            <person name="Pachter L."/>
            <person name="Bray N."/>
            <person name="Yap V.B."/>
            <person name="Caspi A."/>
            <person name="Tesler G."/>
            <person name="Pevzner P.A."/>
            <person name="Haussler D."/>
            <person name="Roskin K.M."/>
            <person name="Baertsch R."/>
            <person name="Clawson H."/>
            <person name="Furey T.S."/>
            <person name="Hinrichs A.S."/>
            <person name="Karolchik D."/>
            <person name="Kent W.J."/>
            <person name="Rosenbloom K.R."/>
            <person name="Trumbower H."/>
            <person name="Weirauch M."/>
            <person name="Cooper D.N."/>
            <person name="Stenson P.D."/>
            <person name="Ma B."/>
            <person name="Brent M."/>
            <person name="Arumugam M."/>
            <person name="Shteynberg D."/>
            <person name="Copley R.R."/>
            <person name="Taylor M.S."/>
            <person name="Riethman H."/>
            <person name="Mudunuri U."/>
            <person name="Peterson J."/>
            <person name="Guyer M."/>
            <person name="Felsenfeld A."/>
            <person name="Old S."/>
            <person name="Mockrin S."/>
            <person name="Collins F.S."/>
        </authorList>
    </citation>
    <scope>NUCLEOTIDE SEQUENCE [LARGE SCALE GENOMIC DNA]</scope>
    <source>
        <strain>Brown Norway</strain>
    </source>
</reference>
<reference key="2">
    <citation type="journal article" date="2004" name="Genome Res.">
        <title>The status, quality, and expansion of the NIH full-length cDNA project: the Mammalian Gene Collection (MGC).</title>
        <authorList>
            <consortium name="The MGC Project Team"/>
        </authorList>
    </citation>
    <scope>NUCLEOTIDE SEQUENCE [LARGE SCALE MRNA]</scope>
    <source>
        <tissue>Heart</tissue>
    </source>
</reference>
<reference key="3">
    <citation type="journal article" date="2013" name="J. Proteome Res.">
        <title>Site-specific glycan-peptide analysis for determination of N-glycoproteome heterogeneity.</title>
        <authorList>
            <person name="Parker B.L."/>
            <person name="Thaysen-Andersen M."/>
            <person name="Solis N."/>
            <person name="Scott N.E."/>
            <person name="Larsen M.R."/>
            <person name="Graham M.E."/>
            <person name="Packer N.H."/>
            <person name="Cordwell S.J."/>
        </authorList>
    </citation>
    <scope>GLYCOSYLATION [LARGE SCALE ANALYSIS] AT ASN-270</scope>
    <scope>IDENTIFICATION BY MASS SPECTROMETRY [LARGE SCALE ANALYSIS]</scope>
    <source>
        <tissue>Brain</tissue>
    </source>
</reference>
<gene>
    <name type="primary">Nceh1</name>
    <name type="synonym">Aadacl1</name>
</gene>
<name>NCEH1_RAT</name>
<feature type="chain" id="PRO_0000353849" description="Neutral cholesterol ester hydrolase 1">
    <location>
        <begin position="1"/>
        <end position="408"/>
    </location>
</feature>
<feature type="topological domain" description="Cytoplasmic" evidence="4">
    <location>
        <begin position="1"/>
        <end position="4"/>
    </location>
</feature>
<feature type="transmembrane region" description="Helical; Signal-anchor for type II membrane protein" evidence="4">
    <location>
        <begin position="5"/>
        <end position="25"/>
    </location>
</feature>
<feature type="topological domain" description="Lumenal" evidence="4">
    <location>
        <begin position="26"/>
        <end position="408"/>
    </location>
</feature>
<feature type="short sequence motif" description="Involved in the stabilization of the negatively charged intermediate by the formation of the oxyanion hole" evidence="1">
    <location>
        <begin position="113"/>
        <end position="115"/>
    </location>
</feature>
<feature type="active site" evidence="5">
    <location>
        <position position="191"/>
    </location>
</feature>
<feature type="active site" evidence="5">
    <location>
        <position position="348"/>
    </location>
</feature>
<feature type="active site" evidence="5">
    <location>
        <position position="378"/>
    </location>
</feature>
<feature type="glycosylation site" description="N-linked (GlcNAc...) asparagine" evidence="7">
    <location>
        <position position="270"/>
    </location>
</feature>
<feature type="glycosylation site" description="N-linked (GlcNAc...) asparagine" evidence="4">
    <location>
        <position position="367"/>
    </location>
</feature>
<feature type="glycosylation site" description="N-linked (GlcNAc...) asparagine" evidence="4">
    <location>
        <position position="389"/>
    </location>
</feature>
<dbReference type="EC" id="3.1.1.-" evidence="3"/>
<dbReference type="EC" id="3.1.1.71" evidence="3"/>
<dbReference type="EMBL" id="CH473961">
    <property type="protein sequence ID" value="EDM01112.1"/>
    <property type="molecule type" value="Genomic_DNA"/>
</dbReference>
<dbReference type="EMBL" id="BC166533">
    <property type="protein sequence ID" value="AAI66533.1"/>
    <property type="molecule type" value="mRNA"/>
</dbReference>
<dbReference type="RefSeq" id="NP_001120996.1">
    <property type="nucleotide sequence ID" value="NM_001127524.2"/>
</dbReference>
<dbReference type="SMR" id="B2GV54"/>
<dbReference type="FunCoup" id="B2GV54">
    <property type="interactions" value="486"/>
</dbReference>
<dbReference type="STRING" id="10116.ENSRNOP00000017805"/>
<dbReference type="ESTHER" id="rat-nceh1">
    <property type="family name" value="Arylacetamide_deacetylase"/>
</dbReference>
<dbReference type="GlyCosmos" id="B2GV54">
    <property type="glycosylation" value="3 sites, 7 glycans"/>
</dbReference>
<dbReference type="GlyGen" id="B2GV54">
    <property type="glycosylation" value="3 sites, 7 N-linked glycans (1 site)"/>
</dbReference>
<dbReference type="iPTMnet" id="B2GV54"/>
<dbReference type="PhosphoSitePlus" id="B2GV54"/>
<dbReference type="SwissPalm" id="B2GV54"/>
<dbReference type="jPOST" id="B2GV54"/>
<dbReference type="PaxDb" id="10116-ENSRNOP00000017805"/>
<dbReference type="PeptideAtlas" id="B2GV54"/>
<dbReference type="Ensembl" id="ENSRNOT00000017805.8">
    <property type="protein sequence ID" value="ENSRNOP00000017805.5"/>
    <property type="gene ID" value="ENSRNOG00000013313.8"/>
</dbReference>
<dbReference type="GeneID" id="294930"/>
<dbReference type="KEGG" id="rno:294930"/>
<dbReference type="UCSC" id="RGD:1311104">
    <property type="organism name" value="rat"/>
</dbReference>
<dbReference type="AGR" id="RGD:1311104"/>
<dbReference type="CTD" id="57552"/>
<dbReference type="RGD" id="1311104">
    <property type="gene designation" value="Nceh1"/>
</dbReference>
<dbReference type="eggNOG" id="KOG1515">
    <property type="taxonomic scope" value="Eukaryota"/>
</dbReference>
<dbReference type="GeneTree" id="ENSGT00940000156699"/>
<dbReference type="HOGENOM" id="CLU_012494_12_0_1"/>
<dbReference type="InParanoid" id="B2GV54"/>
<dbReference type="OMA" id="FHGCMAF"/>
<dbReference type="OrthoDB" id="408631at2759"/>
<dbReference type="PhylomeDB" id="B2GV54"/>
<dbReference type="TreeFam" id="TF314978"/>
<dbReference type="Reactome" id="R-RNO-8964038">
    <property type="pathway name" value="LDL clearance"/>
</dbReference>
<dbReference type="PRO" id="PR:B2GV54"/>
<dbReference type="Proteomes" id="UP000002494">
    <property type="component" value="Chromosome 2"/>
</dbReference>
<dbReference type="Proteomes" id="UP000234681">
    <property type="component" value="Chromosome 2"/>
</dbReference>
<dbReference type="Bgee" id="ENSRNOG00000013313">
    <property type="expression patterns" value="Expressed in Ammon's horn and 20 other cell types or tissues"/>
</dbReference>
<dbReference type="ExpressionAtlas" id="B2GV54">
    <property type="expression patterns" value="baseline and differential"/>
</dbReference>
<dbReference type="GO" id="GO:0005783">
    <property type="term" value="C:endoplasmic reticulum"/>
    <property type="evidence" value="ECO:0007669"/>
    <property type="project" value="UniProtKB-KW"/>
</dbReference>
<dbReference type="GO" id="GO:0016020">
    <property type="term" value="C:membrane"/>
    <property type="evidence" value="ECO:0000266"/>
    <property type="project" value="RGD"/>
</dbReference>
<dbReference type="GO" id="GO:0005886">
    <property type="term" value="C:plasma membrane"/>
    <property type="evidence" value="ECO:0007669"/>
    <property type="project" value="UniProtKB-SubCell"/>
</dbReference>
<dbReference type="GO" id="GO:0047378">
    <property type="term" value="F:acetylalkylglycerol acetylhydrolase activity"/>
    <property type="evidence" value="ECO:0007669"/>
    <property type="project" value="RHEA"/>
</dbReference>
<dbReference type="GO" id="GO:0042301">
    <property type="term" value="F:phosphate ion binding"/>
    <property type="evidence" value="ECO:0000266"/>
    <property type="project" value="RGD"/>
</dbReference>
<dbReference type="GO" id="GO:0017171">
    <property type="term" value="F:serine hydrolase activity"/>
    <property type="evidence" value="ECO:0000266"/>
    <property type="project" value="RGD"/>
</dbReference>
<dbReference type="GO" id="GO:0046485">
    <property type="term" value="P:ether lipid metabolic process"/>
    <property type="evidence" value="ECO:0000250"/>
    <property type="project" value="UniProtKB"/>
</dbReference>
<dbReference type="GO" id="GO:0016042">
    <property type="term" value="P:lipid catabolic process"/>
    <property type="evidence" value="ECO:0007669"/>
    <property type="project" value="UniProtKB-KW"/>
</dbReference>
<dbReference type="GO" id="GO:0006805">
    <property type="term" value="P:xenobiotic metabolic process"/>
    <property type="evidence" value="ECO:0000266"/>
    <property type="project" value="RGD"/>
</dbReference>
<dbReference type="Gene3D" id="3.40.50.1820">
    <property type="entry name" value="alpha/beta hydrolase"/>
    <property type="match status" value="1"/>
</dbReference>
<dbReference type="InterPro" id="IPR013094">
    <property type="entry name" value="AB_hydrolase_3"/>
</dbReference>
<dbReference type="InterPro" id="IPR029058">
    <property type="entry name" value="AB_hydrolase_fold"/>
</dbReference>
<dbReference type="InterPro" id="IPR017157">
    <property type="entry name" value="Arylacetamide_deacetylase"/>
</dbReference>
<dbReference type="InterPro" id="IPR050300">
    <property type="entry name" value="GDXG_lipolytic_enzyme"/>
</dbReference>
<dbReference type="InterPro" id="IPR033140">
    <property type="entry name" value="Lipase_GDXG_put_SER_AS"/>
</dbReference>
<dbReference type="PANTHER" id="PTHR48081">
    <property type="entry name" value="AB HYDROLASE SUPERFAMILY PROTEIN C4A8.06C"/>
    <property type="match status" value="1"/>
</dbReference>
<dbReference type="PANTHER" id="PTHR48081:SF29">
    <property type="entry name" value="NEUTRAL CHOLESTEROL ESTER HYDROLASE 1"/>
    <property type="match status" value="1"/>
</dbReference>
<dbReference type="Pfam" id="PF07859">
    <property type="entry name" value="Abhydrolase_3"/>
    <property type="match status" value="2"/>
</dbReference>
<dbReference type="PIRSF" id="PIRSF037251">
    <property type="entry name" value="Arylacetamide_deacetylase"/>
    <property type="match status" value="1"/>
</dbReference>
<dbReference type="SUPFAM" id="SSF53474">
    <property type="entry name" value="alpha/beta-Hydrolases"/>
    <property type="match status" value="1"/>
</dbReference>
<dbReference type="PROSITE" id="PS01174">
    <property type="entry name" value="LIPASE_GDXG_SER"/>
    <property type="match status" value="1"/>
</dbReference>